<protein>
    <recommendedName>
        <fullName evidence="1">tRNA-specific 2-thiouridylase MnmA</fullName>
        <ecNumber evidence="1">2.8.1.13</ecNumber>
    </recommendedName>
</protein>
<sequence length="370" mass="40335">MSKKRIVVGMSGGVDSSVTAWLLKQQGYDVVGLFMKNWEDDDDSEYCSTRQDWIDVVSVADLIGVDVEAVNFAAEYKDRVFADFLREYSAGRTPNPDVLCNAEIKFKAFLDHAMALGADTIATGHYARVREVDGRFELLKAFDHTKDQSYFLHRLNQAQLSRTLFPLGEMPKTKVREIAAEIGLPNAKKKDSTGICFIGERPFRDFLNRYLPTKPGPIKTPDGKTIGEHIGLAFYTLGQRKGIGIGGSRDGTGDAWYVARKDMAANTLYVVQGHDHPWLLAHTVHADDLSWVAGHAPAEGTHLGAKTRYRQADAPCTVARAAGGALTLTFSEAQWAVTPGQSAVLYDGEVCLGGGIISAAEPAVVEKAIA</sequence>
<accession>B2UC85</accession>
<proteinExistence type="inferred from homology"/>
<evidence type="ECO:0000255" key="1">
    <source>
        <dbReference type="HAMAP-Rule" id="MF_00144"/>
    </source>
</evidence>
<feature type="chain" id="PRO_1000096302" description="tRNA-specific 2-thiouridylase MnmA">
    <location>
        <begin position="1"/>
        <end position="370"/>
    </location>
</feature>
<feature type="region of interest" description="Interaction with target base in tRNA" evidence="1">
    <location>
        <begin position="95"/>
        <end position="97"/>
    </location>
</feature>
<feature type="region of interest" description="Interaction with tRNA" evidence="1">
    <location>
        <begin position="146"/>
        <end position="148"/>
    </location>
</feature>
<feature type="region of interest" description="Interaction with tRNA" evidence="1">
    <location>
        <begin position="308"/>
        <end position="309"/>
    </location>
</feature>
<feature type="active site" description="Nucleophile" evidence="1">
    <location>
        <position position="100"/>
    </location>
</feature>
<feature type="active site" description="Cysteine persulfide intermediate" evidence="1">
    <location>
        <position position="196"/>
    </location>
</feature>
<feature type="binding site" evidence="1">
    <location>
        <begin position="9"/>
        <end position="16"/>
    </location>
    <ligand>
        <name>ATP</name>
        <dbReference type="ChEBI" id="CHEBI:30616"/>
    </ligand>
</feature>
<feature type="binding site" evidence="1">
    <location>
        <position position="35"/>
    </location>
    <ligand>
        <name>ATP</name>
        <dbReference type="ChEBI" id="CHEBI:30616"/>
    </ligand>
</feature>
<feature type="binding site" evidence="1">
    <location>
        <position position="124"/>
    </location>
    <ligand>
        <name>ATP</name>
        <dbReference type="ChEBI" id="CHEBI:30616"/>
    </ligand>
</feature>
<feature type="site" description="Interaction with tRNA" evidence="1">
    <location>
        <position position="125"/>
    </location>
</feature>
<feature type="site" description="Interaction with tRNA" evidence="1">
    <location>
        <position position="341"/>
    </location>
</feature>
<feature type="disulfide bond" description="Alternate" evidence="1">
    <location>
        <begin position="100"/>
        <end position="196"/>
    </location>
</feature>
<keyword id="KW-0067">ATP-binding</keyword>
<keyword id="KW-0963">Cytoplasm</keyword>
<keyword id="KW-1015">Disulfide bond</keyword>
<keyword id="KW-0547">Nucleotide-binding</keyword>
<keyword id="KW-0694">RNA-binding</keyword>
<keyword id="KW-0808">Transferase</keyword>
<keyword id="KW-0819">tRNA processing</keyword>
<keyword id="KW-0820">tRNA-binding</keyword>
<organism>
    <name type="scientific">Ralstonia pickettii (strain 12J)</name>
    <dbReference type="NCBI Taxonomy" id="402626"/>
    <lineage>
        <taxon>Bacteria</taxon>
        <taxon>Pseudomonadati</taxon>
        <taxon>Pseudomonadota</taxon>
        <taxon>Betaproteobacteria</taxon>
        <taxon>Burkholderiales</taxon>
        <taxon>Burkholderiaceae</taxon>
        <taxon>Ralstonia</taxon>
    </lineage>
</organism>
<name>MNMA_RALPJ</name>
<reference key="1">
    <citation type="submission" date="2008-05" db="EMBL/GenBank/DDBJ databases">
        <title>Complete sequence of chromosome 1 of Ralstonia pickettii 12J.</title>
        <authorList>
            <person name="Lucas S."/>
            <person name="Copeland A."/>
            <person name="Lapidus A."/>
            <person name="Glavina del Rio T."/>
            <person name="Dalin E."/>
            <person name="Tice H."/>
            <person name="Bruce D."/>
            <person name="Goodwin L."/>
            <person name="Pitluck S."/>
            <person name="Meincke L."/>
            <person name="Brettin T."/>
            <person name="Detter J.C."/>
            <person name="Han C."/>
            <person name="Kuske C.R."/>
            <person name="Schmutz J."/>
            <person name="Larimer F."/>
            <person name="Land M."/>
            <person name="Hauser L."/>
            <person name="Kyrpides N."/>
            <person name="Mikhailova N."/>
            <person name="Marsh T."/>
            <person name="Richardson P."/>
        </authorList>
    </citation>
    <scope>NUCLEOTIDE SEQUENCE [LARGE SCALE GENOMIC DNA]</scope>
    <source>
        <strain>12J</strain>
    </source>
</reference>
<gene>
    <name evidence="1" type="primary">mnmA</name>
    <name type="ordered locus">Rpic_2967</name>
</gene>
<dbReference type="EC" id="2.8.1.13" evidence="1"/>
<dbReference type="EMBL" id="CP001068">
    <property type="protein sequence ID" value="ACD28090.1"/>
    <property type="molecule type" value="Genomic_DNA"/>
</dbReference>
<dbReference type="SMR" id="B2UC85"/>
<dbReference type="STRING" id="402626.Rpic_2967"/>
<dbReference type="KEGG" id="rpi:Rpic_2967"/>
<dbReference type="PATRIC" id="fig|402626.5.peg.4103"/>
<dbReference type="eggNOG" id="COG0482">
    <property type="taxonomic scope" value="Bacteria"/>
</dbReference>
<dbReference type="HOGENOM" id="CLU_035188_1_0_4"/>
<dbReference type="GO" id="GO:0005737">
    <property type="term" value="C:cytoplasm"/>
    <property type="evidence" value="ECO:0007669"/>
    <property type="project" value="UniProtKB-SubCell"/>
</dbReference>
<dbReference type="GO" id="GO:0005524">
    <property type="term" value="F:ATP binding"/>
    <property type="evidence" value="ECO:0007669"/>
    <property type="project" value="UniProtKB-KW"/>
</dbReference>
<dbReference type="GO" id="GO:0000049">
    <property type="term" value="F:tRNA binding"/>
    <property type="evidence" value="ECO:0007669"/>
    <property type="project" value="UniProtKB-KW"/>
</dbReference>
<dbReference type="GO" id="GO:0103016">
    <property type="term" value="F:tRNA-uridine 2-sulfurtransferase activity"/>
    <property type="evidence" value="ECO:0007669"/>
    <property type="project" value="UniProtKB-EC"/>
</dbReference>
<dbReference type="GO" id="GO:0002143">
    <property type="term" value="P:tRNA wobble position uridine thiolation"/>
    <property type="evidence" value="ECO:0007669"/>
    <property type="project" value="TreeGrafter"/>
</dbReference>
<dbReference type="CDD" id="cd01998">
    <property type="entry name" value="MnmA_TRMU-like"/>
    <property type="match status" value="1"/>
</dbReference>
<dbReference type="FunFam" id="2.30.30.280:FF:000001">
    <property type="entry name" value="tRNA-specific 2-thiouridylase MnmA"/>
    <property type="match status" value="1"/>
</dbReference>
<dbReference type="FunFam" id="2.40.30.10:FF:000023">
    <property type="entry name" value="tRNA-specific 2-thiouridylase MnmA"/>
    <property type="match status" value="1"/>
</dbReference>
<dbReference type="FunFam" id="3.40.50.620:FF:000004">
    <property type="entry name" value="tRNA-specific 2-thiouridylase MnmA"/>
    <property type="match status" value="1"/>
</dbReference>
<dbReference type="Gene3D" id="2.30.30.280">
    <property type="entry name" value="Adenine nucleotide alpha hydrolases-like domains"/>
    <property type="match status" value="1"/>
</dbReference>
<dbReference type="Gene3D" id="3.40.50.620">
    <property type="entry name" value="HUPs"/>
    <property type="match status" value="1"/>
</dbReference>
<dbReference type="Gene3D" id="2.40.30.10">
    <property type="entry name" value="Translation factors"/>
    <property type="match status" value="1"/>
</dbReference>
<dbReference type="HAMAP" id="MF_00144">
    <property type="entry name" value="tRNA_thiouridyl_MnmA"/>
    <property type="match status" value="1"/>
</dbReference>
<dbReference type="InterPro" id="IPR004506">
    <property type="entry name" value="MnmA-like"/>
</dbReference>
<dbReference type="InterPro" id="IPR046885">
    <property type="entry name" value="MnmA-like_C"/>
</dbReference>
<dbReference type="InterPro" id="IPR046884">
    <property type="entry name" value="MnmA-like_central"/>
</dbReference>
<dbReference type="InterPro" id="IPR023382">
    <property type="entry name" value="MnmA-like_central_sf"/>
</dbReference>
<dbReference type="InterPro" id="IPR014729">
    <property type="entry name" value="Rossmann-like_a/b/a_fold"/>
</dbReference>
<dbReference type="NCBIfam" id="NF001138">
    <property type="entry name" value="PRK00143.1"/>
    <property type="match status" value="1"/>
</dbReference>
<dbReference type="NCBIfam" id="TIGR00420">
    <property type="entry name" value="trmU"/>
    <property type="match status" value="1"/>
</dbReference>
<dbReference type="PANTHER" id="PTHR11933:SF5">
    <property type="entry name" value="MITOCHONDRIAL TRNA-SPECIFIC 2-THIOURIDYLASE 1"/>
    <property type="match status" value="1"/>
</dbReference>
<dbReference type="PANTHER" id="PTHR11933">
    <property type="entry name" value="TRNA 5-METHYLAMINOMETHYL-2-THIOURIDYLATE -METHYLTRANSFERASE"/>
    <property type="match status" value="1"/>
</dbReference>
<dbReference type="Pfam" id="PF03054">
    <property type="entry name" value="tRNA_Me_trans"/>
    <property type="match status" value="1"/>
</dbReference>
<dbReference type="Pfam" id="PF20258">
    <property type="entry name" value="tRNA_Me_trans_C"/>
    <property type="match status" value="1"/>
</dbReference>
<dbReference type="Pfam" id="PF20259">
    <property type="entry name" value="tRNA_Me_trans_M"/>
    <property type="match status" value="1"/>
</dbReference>
<dbReference type="SUPFAM" id="SSF52402">
    <property type="entry name" value="Adenine nucleotide alpha hydrolases-like"/>
    <property type="match status" value="1"/>
</dbReference>
<comment type="function">
    <text evidence="1">Catalyzes the 2-thiolation of uridine at the wobble position (U34) of tRNA, leading to the formation of s(2)U34.</text>
</comment>
<comment type="catalytic activity">
    <reaction evidence="1">
        <text>S-sulfanyl-L-cysteinyl-[protein] + uridine(34) in tRNA + AH2 + ATP = 2-thiouridine(34) in tRNA + L-cysteinyl-[protein] + A + AMP + diphosphate + H(+)</text>
        <dbReference type="Rhea" id="RHEA:47032"/>
        <dbReference type="Rhea" id="RHEA-COMP:10131"/>
        <dbReference type="Rhea" id="RHEA-COMP:11726"/>
        <dbReference type="Rhea" id="RHEA-COMP:11727"/>
        <dbReference type="Rhea" id="RHEA-COMP:11728"/>
        <dbReference type="ChEBI" id="CHEBI:13193"/>
        <dbReference type="ChEBI" id="CHEBI:15378"/>
        <dbReference type="ChEBI" id="CHEBI:17499"/>
        <dbReference type="ChEBI" id="CHEBI:29950"/>
        <dbReference type="ChEBI" id="CHEBI:30616"/>
        <dbReference type="ChEBI" id="CHEBI:33019"/>
        <dbReference type="ChEBI" id="CHEBI:61963"/>
        <dbReference type="ChEBI" id="CHEBI:65315"/>
        <dbReference type="ChEBI" id="CHEBI:87170"/>
        <dbReference type="ChEBI" id="CHEBI:456215"/>
        <dbReference type="EC" id="2.8.1.13"/>
    </reaction>
</comment>
<comment type="subcellular location">
    <subcellularLocation>
        <location evidence="1">Cytoplasm</location>
    </subcellularLocation>
</comment>
<comment type="similarity">
    <text evidence="1">Belongs to the MnmA/TRMU family.</text>
</comment>